<reference key="1">
    <citation type="journal article" date="1992" name="EMBO J.">
        <title>Drosophila UbcD1 encodes a highly conserved ubiquitin-conjugating enzyme involved in selective protein degradation.</title>
        <authorList>
            <person name="Treier M."/>
            <person name="Seufert W."/>
            <person name="Jentsch S."/>
        </authorList>
    </citation>
    <scope>NUCLEOTIDE SEQUENCE [MRNA]</scope>
    <source>
        <strain>Oregon-P2</strain>
    </source>
</reference>
<reference key="2">
    <citation type="journal article" date="2000" name="Science">
        <title>The genome sequence of Drosophila melanogaster.</title>
        <authorList>
            <person name="Adams M.D."/>
            <person name="Celniker S.E."/>
            <person name="Holt R.A."/>
            <person name="Evans C.A."/>
            <person name="Gocayne J.D."/>
            <person name="Amanatides P.G."/>
            <person name="Scherer S.E."/>
            <person name="Li P.W."/>
            <person name="Hoskins R.A."/>
            <person name="Galle R.F."/>
            <person name="George R.A."/>
            <person name="Lewis S.E."/>
            <person name="Richards S."/>
            <person name="Ashburner M."/>
            <person name="Henderson S.N."/>
            <person name="Sutton G.G."/>
            <person name="Wortman J.R."/>
            <person name="Yandell M.D."/>
            <person name="Zhang Q."/>
            <person name="Chen L.X."/>
            <person name="Brandon R.C."/>
            <person name="Rogers Y.-H.C."/>
            <person name="Blazej R.G."/>
            <person name="Champe M."/>
            <person name="Pfeiffer B.D."/>
            <person name="Wan K.H."/>
            <person name="Doyle C."/>
            <person name="Baxter E.G."/>
            <person name="Helt G."/>
            <person name="Nelson C.R."/>
            <person name="Miklos G.L.G."/>
            <person name="Abril J.F."/>
            <person name="Agbayani A."/>
            <person name="An H.-J."/>
            <person name="Andrews-Pfannkoch C."/>
            <person name="Baldwin D."/>
            <person name="Ballew R.M."/>
            <person name="Basu A."/>
            <person name="Baxendale J."/>
            <person name="Bayraktaroglu L."/>
            <person name="Beasley E.M."/>
            <person name="Beeson K.Y."/>
            <person name="Benos P.V."/>
            <person name="Berman B.P."/>
            <person name="Bhandari D."/>
            <person name="Bolshakov S."/>
            <person name="Borkova D."/>
            <person name="Botchan M.R."/>
            <person name="Bouck J."/>
            <person name="Brokstein P."/>
            <person name="Brottier P."/>
            <person name="Burtis K.C."/>
            <person name="Busam D.A."/>
            <person name="Butler H."/>
            <person name="Cadieu E."/>
            <person name="Center A."/>
            <person name="Chandra I."/>
            <person name="Cherry J.M."/>
            <person name="Cawley S."/>
            <person name="Dahlke C."/>
            <person name="Davenport L.B."/>
            <person name="Davies P."/>
            <person name="de Pablos B."/>
            <person name="Delcher A."/>
            <person name="Deng Z."/>
            <person name="Mays A.D."/>
            <person name="Dew I."/>
            <person name="Dietz S.M."/>
            <person name="Dodson K."/>
            <person name="Doup L.E."/>
            <person name="Downes M."/>
            <person name="Dugan-Rocha S."/>
            <person name="Dunkov B.C."/>
            <person name="Dunn P."/>
            <person name="Durbin K.J."/>
            <person name="Evangelista C.C."/>
            <person name="Ferraz C."/>
            <person name="Ferriera S."/>
            <person name="Fleischmann W."/>
            <person name="Fosler C."/>
            <person name="Gabrielian A.E."/>
            <person name="Garg N.S."/>
            <person name="Gelbart W.M."/>
            <person name="Glasser K."/>
            <person name="Glodek A."/>
            <person name="Gong F."/>
            <person name="Gorrell J.H."/>
            <person name="Gu Z."/>
            <person name="Guan P."/>
            <person name="Harris M."/>
            <person name="Harris N.L."/>
            <person name="Harvey D.A."/>
            <person name="Heiman T.J."/>
            <person name="Hernandez J.R."/>
            <person name="Houck J."/>
            <person name="Hostin D."/>
            <person name="Houston K.A."/>
            <person name="Howland T.J."/>
            <person name="Wei M.-H."/>
            <person name="Ibegwam C."/>
            <person name="Jalali M."/>
            <person name="Kalush F."/>
            <person name="Karpen G.H."/>
            <person name="Ke Z."/>
            <person name="Kennison J.A."/>
            <person name="Ketchum K.A."/>
            <person name="Kimmel B.E."/>
            <person name="Kodira C.D."/>
            <person name="Kraft C.L."/>
            <person name="Kravitz S."/>
            <person name="Kulp D."/>
            <person name="Lai Z."/>
            <person name="Lasko P."/>
            <person name="Lei Y."/>
            <person name="Levitsky A.A."/>
            <person name="Li J.H."/>
            <person name="Li Z."/>
            <person name="Liang Y."/>
            <person name="Lin X."/>
            <person name="Liu X."/>
            <person name="Mattei B."/>
            <person name="McIntosh T.C."/>
            <person name="McLeod M.P."/>
            <person name="McPherson D."/>
            <person name="Merkulov G."/>
            <person name="Milshina N.V."/>
            <person name="Mobarry C."/>
            <person name="Morris J."/>
            <person name="Moshrefi A."/>
            <person name="Mount S.M."/>
            <person name="Moy M."/>
            <person name="Murphy B."/>
            <person name="Murphy L."/>
            <person name="Muzny D.M."/>
            <person name="Nelson D.L."/>
            <person name="Nelson D.R."/>
            <person name="Nelson K.A."/>
            <person name="Nixon K."/>
            <person name="Nusskern D.R."/>
            <person name="Pacleb J.M."/>
            <person name="Palazzolo M."/>
            <person name="Pittman G.S."/>
            <person name="Pan S."/>
            <person name="Pollard J."/>
            <person name="Puri V."/>
            <person name="Reese M.G."/>
            <person name="Reinert K."/>
            <person name="Remington K."/>
            <person name="Saunders R.D.C."/>
            <person name="Scheeler F."/>
            <person name="Shen H."/>
            <person name="Shue B.C."/>
            <person name="Siden-Kiamos I."/>
            <person name="Simpson M."/>
            <person name="Skupski M.P."/>
            <person name="Smith T.J."/>
            <person name="Spier E."/>
            <person name="Spradling A.C."/>
            <person name="Stapleton M."/>
            <person name="Strong R."/>
            <person name="Sun E."/>
            <person name="Svirskas R."/>
            <person name="Tector C."/>
            <person name="Turner R."/>
            <person name="Venter E."/>
            <person name="Wang A.H."/>
            <person name="Wang X."/>
            <person name="Wang Z.-Y."/>
            <person name="Wassarman D.A."/>
            <person name="Weinstock G.M."/>
            <person name="Weissenbach J."/>
            <person name="Williams S.M."/>
            <person name="Woodage T."/>
            <person name="Worley K.C."/>
            <person name="Wu D."/>
            <person name="Yang S."/>
            <person name="Yao Q.A."/>
            <person name="Ye J."/>
            <person name="Yeh R.-F."/>
            <person name="Zaveri J.S."/>
            <person name="Zhan M."/>
            <person name="Zhang G."/>
            <person name="Zhao Q."/>
            <person name="Zheng L."/>
            <person name="Zheng X.H."/>
            <person name="Zhong F.N."/>
            <person name="Zhong W."/>
            <person name="Zhou X."/>
            <person name="Zhu S.C."/>
            <person name="Zhu X."/>
            <person name="Smith H.O."/>
            <person name="Gibbs R.A."/>
            <person name="Myers E.W."/>
            <person name="Rubin G.M."/>
            <person name="Venter J.C."/>
        </authorList>
    </citation>
    <scope>NUCLEOTIDE SEQUENCE [LARGE SCALE GENOMIC DNA]</scope>
    <source>
        <strain>Berkeley</strain>
    </source>
</reference>
<reference key="3">
    <citation type="journal article" date="2002" name="Genome Biol.">
        <title>Annotation of the Drosophila melanogaster euchromatic genome: a systematic review.</title>
        <authorList>
            <person name="Misra S."/>
            <person name="Crosby M.A."/>
            <person name="Mungall C.J."/>
            <person name="Matthews B.B."/>
            <person name="Campbell K.S."/>
            <person name="Hradecky P."/>
            <person name="Huang Y."/>
            <person name="Kaminker J.S."/>
            <person name="Millburn G.H."/>
            <person name="Prochnik S.E."/>
            <person name="Smith C.D."/>
            <person name="Tupy J.L."/>
            <person name="Whitfield E.J."/>
            <person name="Bayraktaroglu L."/>
            <person name="Berman B.P."/>
            <person name="Bettencourt B.R."/>
            <person name="Celniker S.E."/>
            <person name="de Grey A.D.N.J."/>
            <person name="Drysdale R.A."/>
            <person name="Harris N.L."/>
            <person name="Richter J."/>
            <person name="Russo S."/>
            <person name="Schroeder A.J."/>
            <person name="Shu S.Q."/>
            <person name="Stapleton M."/>
            <person name="Yamada C."/>
            <person name="Ashburner M."/>
            <person name="Gelbart W.M."/>
            <person name="Rubin G.M."/>
            <person name="Lewis S.E."/>
        </authorList>
    </citation>
    <scope>GENOME REANNOTATION</scope>
    <source>
        <strain>Berkeley</strain>
    </source>
</reference>
<reference key="4">
    <citation type="journal article" date="2002" name="Genome Biol.">
        <title>A Drosophila full-length cDNA resource.</title>
        <authorList>
            <person name="Stapleton M."/>
            <person name="Carlson J.W."/>
            <person name="Brokstein P."/>
            <person name="Yu C."/>
            <person name="Champe M."/>
            <person name="George R.A."/>
            <person name="Guarin H."/>
            <person name="Kronmiller B."/>
            <person name="Pacleb J.M."/>
            <person name="Park S."/>
            <person name="Wan K.H."/>
            <person name="Rubin G.M."/>
            <person name="Celniker S.E."/>
        </authorList>
    </citation>
    <scope>NUCLEOTIDE SEQUENCE [LARGE SCALE MRNA]</scope>
    <source>
        <strain>Berkeley</strain>
        <tissue>Head</tissue>
    </source>
</reference>
<reference key="5">
    <citation type="journal article" date="1997" name="Genes Dev.">
        <title>UbcD1, a Drosophila ubiquitin-conjugating enzyme required for proper telomere behavior.</title>
        <authorList>
            <person name="Cenci G."/>
            <person name="Rawson R.B."/>
            <person name="Belloni G."/>
            <person name="Castrillon D.H."/>
            <person name="Tudor M."/>
            <person name="Petrucci R."/>
            <person name="Goldberg M.L."/>
            <person name="Wasserman S.A."/>
            <person name="Gatti M."/>
        </authorList>
    </citation>
    <scope>NUCLEOTIDE SEQUENCE [MRNA] OF 1-11</scope>
    <scope>FUNCTION</scope>
</reference>
<dbReference type="EC" id="2.3.2.23"/>
<dbReference type="EMBL" id="X62575">
    <property type="protein sequence ID" value="CAA44453.1"/>
    <property type="molecule type" value="mRNA"/>
</dbReference>
<dbReference type="EMBL" id="AE014297">
    <property type="protein sequence ID" value="AAF55093.1"/>
    <property type="molecule type" value="Genomic_DNA"/>
</dbReference>
<dbReference type="EMBL" id="AY060304">
    <property type="protein sequence ID" value="AAL25343.1"/>
    <property type="molecule type" value="mRNA"/>
</dbReference>
<dbReference type="EMBL" id="U68298">
    <property type="protein sequence ID" value="AAB39622.1"/>
    <property type="molecule type" value="mRNA"/>
</dbReference>
<dbReference type="PIR" id="S19157">
    <property type="entry name" value="S19157"/>
</dbReference>
<dbReference type="RefSeq" id="NP_001262578.1">
    <property type="nucleotide sequence ID" value="NM_001275649.1"/>
</dbReference>
<dbReference type="RefSeq" id="NP_001262579.1">
    <property type="nucleotide sequence ID" value="NM_001275650.1"/>
</dbReference>
<dbReference type="RefSeq" id="NP_731941.1">
    <property type="nucleotide sequence ID" value="NM_169601.2"/>
</dbReference>
<dbReference type="SMR" id="P25867"/>
<dbReference type="BioGRID" id="66859">
    <property type="interactions" value="43"/>
</dbReference>
<dbReference type="DIP" id="DIP-18953N"/>
<dbReference type="FunCoup" id="P25867">
    <property type="interactions" value="2291"/>
</dbReference>
<dbReference type="IntAct" id="P25867">
    <property type="interactions" value="11"/>
</dbReference>
<dbReference type="STRING" id="7227.FBpp0082477"/>
<dbReference type="PaxDb" id="7227-FBpp0082477"/>
<dbReference type="DNASU" id="41785"/>
<dbReference type="EnsemblMetazoa" id="FBtr0083018">
    <property type="protein sequence ID" value="FBpp0082477"/>
    <property type="gene ID" value="FBgn0011217"/>
</dbReference>
<dbReference type="EnsemblMetazoa" id="FBtr0310554">
    <property type="protein sequence ID" value="FBpp0302691"/>
    <property type="gene ID" value="FBgn0011217"/>
</dbReference>
<dbReference type="EnsemblMetazoa" id="FBtr0336876">
    <property type="protein sequence ID" value="FBpp0307824"/>
    <property type="gene ID" value="FBgn0011217"/>
</dbReference>
<dbReference type="GeneID" id="41785"/>
<dbReference type="KEGG" id="dme:Dmel_CG7425"/>
<dbReference type="AGR" id="FB:FBgn0011217"/>
<dbReference type="CTD" id="41785"/>
<dbReference type="FlyBase" id="FBgn0011217">
    <property type="gene designation" value="eff"/>
</dbReference>
<dbReference type="VEuPathDB" id="VectorBase:FBgn0011217"/>
<dbReference type="eggNOG" id="KOG0417">
    <property type="taxonomic scope" value="Eukaryota"/>
</dbReference>
<dbReference type="GeneTree" id="ENSGT00940000155109"/>
<dbReference type="HOGENOM" id="CLU_030988_13_3_1"/>
<dbReference type="InParanoid" id="P25867"/>
<dbReference type="OMA" id="PNIASMY"/>
<dbReference type="OrthoDB" id="7851174at2759"/>
<dbReference type="PhylomeDB" id="P25867"/>
<dbReference type="Reactome" id="R-DME-1234176">
    <property type="pathway name" value="Oxygen-dependent proline hydroxylation of Hypoxia-inducible Factor Alpha"/>
</dbReference>
<dbReference type="Reactome" id="R-DME-141430">
    <property type="pathway name" value="Inactivation of APC/C via direct inhibition of the APC/C complex"/>
</dbReference>
<dbReference type="Reactome" id="R-DME-174048">
    <property type="pathway name" value="APC/C:Cdc20 mediated degradation of Cyclin B"/>
</dbReference>
<dbReference type="Reactome" id="R-DME-174084">
    <property type="pathway name" value="Autodegradation of Cdh1 by Cdh1:APC/C"/>
</dbReference>
<dbReference type="Reactome" id="R-DME-174154">
    <property type="pathway name" value="APC/C:Cdc20 mediated degradation of Securin"/>
</dbReference>
<dbReference type="Reactome" id="R-DME-174178">
    <property type="pathway name" value="APC/C:Cdh1 mediated degradation of Cdc20 and other APC/C:Cdh1 targeted proteins in late mitosis/early G1"/>
</dbReference>
<dbReference type="Reactome" id="R-DME-174184">
    <property type="pathway name" value="Cdc20:Phospho-APC/C mediated degradation of Cyclin A"/>
</dbReference>
<dbReference type="Reactome" id="R-DME-176407">
    <property type="pathway name" value="Conversion from APC/C:Cdc20 to APC/C:Cdh1 in late anaphase"/>
</dbReference>
<dbReference type="Reactome" id="R-DME-176408">
    <property type="pathway name" value="Regulation of APC/C activators between G1/S and early anaphase"/>
</dbReference>
<dbReference type="Reactome" id="R-DME-176409">
    <property type="pathway name" value="APC/C:Cdc20 mediated degradation of mitotic proteins"/>
</dbReference>
<dbReference type="Reactome" id="R-DME-176412">
    <property type="pathway name" value="Phosphorylation of the APC/C"/>
</dbReference>
<dbReference type="Reactome" id="R-DME-179409">
    <property type="pathway name" value="APC-Cdc20 mediated degradation of Nek2A"/>
</dbReference>
<dbReference type="Reactome" id="R-DME-201451">
    <property type="pathway name" value="Signaling by BMP"/>
</dbReference>
<dbReference type="Reactome" id="R-DME-209360">
    <property type="pathway name" value="Ubiquitination and proteolysis of phosphorylated CI"/>
</dbReference>
<dbReference type="Reactome" id="R-DME-209461">
    <property type="pathway name" value="Ubiquitination and degradation of phosphorylated ARM"/>
</dbReference>
<dbReference type="Reactome" id="R-DME-2173795">
    <property type="pathway name" value="Downregulation of SMAD2/3:SMAD4 transcriptional activity"/>
</dbReference>
<dbReference type="Reactome" id="R-DME-2467813">
    <property type="pathway name" value="Separation of Sister Chromatids"/>
</dbReference>
<dbReference type="Reactome" id="R-DME-2559582">
    <property type="pathway name" value="Senescence-Associated Secretory Phenotype (SASP)"/>
</dbReference>
<dbReference type="Reactome" id="R-DME-5357905">
    <property type="pathway name" value="Regulation of TNFR1 signaling"/>
</dbReference>
<dbReference type="Reactome" id="R-DME-5689896">
    <property type="pathway name" value="Ovarian tumor domain proteases"/>
</dbReference>
<dbReference type="Reactome" id="R-DME-69017">
    <property type="pathway name" value="CDK-mediated phosphorylation and removal of Cdc6"/>
</dbReference>
<dbReference type="Reactome" id="R-DME-8866652">
    <property type="pathway name" value="Synthesis of active ubiquitin: roles of E1 and E2 enzymes"/>
</dbReference>
<dbReference type="Reactome" id="R-DME-8866654">
    <property type="pathway name" value="E3 ubiquitin ligases ubiquitinate target proteins"/>
</dbReference>
<dbReference type="Reactome" id="R-DME-8951664">
    <property type="pathway name" value="Neddylation"/>
</dbReference>
<dbReference type="Reactome" id="R-DME-9033241">
    <property type="pathway name" value="Peroxisomal protein import"/>
</dbReference>
<dbReference type="Reactome" id="R-DME-983168">
    <property type="pathway name" value="Antigen processing: Ubiquitination &amp; Proteasome degradation"/>
</dbReference>
<dbReference type="SignaLink" id="P25867"/>
<dbReference type="UniPathway" id="UPA00143"/>
<dbReference type="BioGRID-ORCS" id="41785">
    <property type="hits" value="1 hit in 3 CRISPR screens"/>
</dbReference>
<dbReference type="ChiTaRS" id="eff">
    <property type="organism name" value="fly"/>
</dbReference>
<dbReference type="GenomeRNAi" id="41785"/>
<dbReference type="PRO" id="PR:P25867"/>
<dbReference type="Proteomes" id="UP000000803">
    <property type="component" value="Chromosome 3R"/>
</dbReference>
<dbReference type="Bgee" id="FBgn0011217">
    <property type="expression patterns" value="Expressed in spermatocyte in testis and 289 other cell types or tissues"/>
</dbReference>
<dbReference type="ExpressionAtlas" id="P25867">
    <property type="expression patterns" value="baseline and differential"/>
</dbReference>
<dbReference type="GO" id="GO:0005829">
    <property type="term" value="C:cytosol"/>
    <property type="evidence" value="ECO:0000304"/>
    <property type="project" value="Reactome"/>
</dbReference>
<dbReference type="GO" id="GO:0005634">
    <property type="term" value="C:nucleus"/>
    <property type="evidence" value="ECO:0000318"/>
    <property type="project" value="GO_Central"/>
</dbReference>
<dbReference type="GO" id="GO:0005524">
    <property type="term" value="F:ATP binding"/>
    <property type="evidence" value="ECO:0007669"/>
    <property type="project" value="UniProtKB-KW"/>
</dbReference>
<dbReference type="GO" id="GO:0061631">
    <property type="term" value="F:ubiquitin conjugating enzyme activity"/>
    <property type="evidence" value="ECO:0000314"/>
    <property type="project" value="FlyBase"/>
</dbReference>
<dbReference type="GO" id="GO:0031625">
    <property type="term" value="F:ubiquitin protein ligase binding"/>
    <property type="evidence" value="ECO:0000353"/>
    <property type="project" value="FlyBase"/>
</dbReference>
<dbReference type="GO" id="GO:0031145">
    <property type="term" value="P:anaphase-promoting complex-dependent catabolic process"/>
    <property type="evidence" value="ECO:0000315"/>
    <property type="project" value="FlyBase"/>
</dbReference>
<dbReference type="GO" id="GO:0051276">
    <property type="term" value="P:chromosome organization"/>
    <property type="evidence" value="ECO:0000315"/>
    <property type="project" value="FlyBase"/>
</dbReference>
<dbReference type="GO" id="GO:0001745">
    <property type="term" value="P:compound eye morphogenesis"/>
    <property type="evidence" value="ECO:0000315"/>
    <property type="project" value="FlyBase"/>
</dbReference>
<dbReference type="GO" id="GO:0001751">
    <property type="term" value="P:compound eye photoreceptor cell differentiation"/>
    <property type="evidence" value="ECO:0000315"/>
    <property type="project" value="FlyBase"/>
</dbReference>
<dbReference type="GO" id="GO:0048132">
    <property type="term" value="P:female germ-line stem cell asymmetric division"/>
    <property type="evidence" value="ECO:0000315"/>
    <property type="project" value="FlyBase"/>
</dbReference>
<dbReference type="GO" id="GO:0030718">
    <property type="term" value="P:germ-line stem cell population maintenance"/>
    <property type="evidence" value="ECO:0000315"/>
    <property type="project" value="FlyBase"/>
</dbReference>
<dbReference type="GO" id="GO:0007140">
    <property type="term" value="P:male meiotic nuclear division"/>
    <property type="evidence" value="ECO:0000315"/>
    <property type="project" value="FlyBase"/>
</dbReference>
<dbReference type="GO" id="GO:0000278">
    <property type="term" value="P:mitotic cell cycle"/>
    <property type="evidence" value="ECO:0000315"/>
    <property type="project" value="FlyBase"/>
</dbReference>
<dbReference type="GO" id="GO:0045879">
    <property type="term" value="P:negative regulation of smoothened signaling pathway"/>
    <property type="evidence" value="ECO:0000315"/>
    <property type="project" value="FlyBase"/>
</dbReference>
<dbReference type="GO" id="GO:0016322">
    <property type="term" value="P:neuron remodeling"/>
    <property type="evidence" value="ECO:0000314"/>
    <property type="project" value="FlyBase"/>
</dbReference>
<dbReference type="GO" id="GO:0061057">
    <property type="term" value="P:peptidoglycan recognition protein signaling pathway"/>
    <property type="evidence" value="ECO:0000315"/>
    <property type="project" value="FlyBase"/>
</dbReference>
<dbReference type="GO" id="GO:0097039">
    <property type="term" value="P:protein linear polyubiquitination"/>
    <property type="evidence" value="ECO:0000314"/>
    <property type="project" value="FlyBase"/>
</dbReference>
<dbReference type="GO" id="GO:0000209">
    <property type="term" value="P:protein polyubiquitination"/>
    <property type="evidence" value="ECO:0000314"/>
    <property type="project" value="FlyBase"/>
</dbReference>
<dbReference type="GO" id="GO:0016567">
    <property type="term" value="P:protein ubiquitination"/>
    <property type="evidence" value="ECO:0000314"/>
    <property type="project" value="FlyBase"/>
</dbReference>
<dbReference type="GO" id="GO:0031647">
    <property type="term" value="P:regulation of protein stability"/>
    <property type="evidence" value="ECO:0000315"/>
    <property type="project" value="FlyBase"/>
</dbReference>
<dbReference type="GO" id="GO:0045676">
    <property type="term" value="P:regulation of R7 cell differentiation"/>
    <property type="evidence" value="ECO:0000316"/>
    <property type="project" value="FlyBase"/>
</dbReference>
<dbReference type="GO" id="GO:0006511">
    <property type="term" value="P:ubiquitin-dependent protein catabolic process"/>
    <property type="evidence" value="ECO:0000315"/>
    <property type="project" value="FlyBase"/>
</dbReference>
<dbReference type="CDD" id="cd23792">
    <property type="entry name" value="UBCc_UBE2D"/>
    <property type="match status" value="1"/>
</dbReference>
<dbReference type="FunFam" id="3.10.110.10:FF:000101">
    <property type="entry name" value="Ubiquitin-conjugating enzyme E2 D2"/>
    <property type="match status" value="1"/>
</dbReference>
<dbReference type="Gene3D" id="3.10.110.10">
    <property type="entry name" value="Ubiquitin Conjugating Enzyme"/>
    <property type="match status" value="1"/>
</dbReference>
<dbReference type="InterPro" id="IPR000608">
    <property type="entry name" value="UBQ-conjugat_E2_core"/>
</dbReference>
<dbReference type="InterPro" id="IPR023313">
    <property type="entry name" value="UBQ-conjugating_AS"/>
</dbReference>
<dbReference type="InterPro" id="IPR016135">
    <property type="entry name" value="UBQ-conjugating_enzyme/RWD"/>
</dbReference>
<dbReference type="PANTHER" id="PTHR24068">
    <property type="entry name" value="UBIQUITIN-CONJUGATING ENZYME E2"/>
    <property type="match status" value="1"/>
</dbReference>
<dbReference type="Pfam" id="PF00179">
    <property type="entry name" value="UQ_con"/>
    <property type="match status" value="1"/>
</dbReference>
<dbReference type="SMART" id="SM00212">
    <property type="entry name" value="UBCc"/>
    <property type="match status" value="1"/>
</dbReference>
<dbReference type="SUPFAM" id="SSF54495">
    <property type="entry name" value="UBC-like"/>
    <property type="match status" value="1"/>
</dbReference>
<dbReference type="PROSITE" id="PS00183">
    <property type="entry name" value="UBC_1"/>
    <property type="match status" value="1"/>
</dbReference>
<dbReference type="PROSITE" id="PS50127">
    <property type="entry name" value="UBC_2"/>
    <property type="match status" value="1"/>
</dbReference>
<evidence type="ECO:0000255" key="1">
    <source>
        <dbReference type="PROSITE-ProRule" id="PRU00388"/>
    </source>
</evidence>
<evidence type="ECO:0000255" key="2">
    <source>
        <dbReference type="PROSITE-ProRule" id="PRU10133"/>
    </source>
</evidence>
<evidence type="ECO:0000269" key="3">
    <source>
    </source>
</evidence>
<keyword id="KW-0067">ATP-binding</keyword>
<keyword id="KW-0131">Cell cycle</keyword>
<keyword id="KW-0132">Cell division</keyword>
<keyword id="KW-0469">Meiosis</keyword>
<keyword id="KW-0547">Nucleotide-binding</keyword>
<keyword id="KW-1185">Reference proteome</keyword>
<keyword id="KW-0808">Transferase</keyword>
<keyword id="KW-0833">Ubl conjugation pathway</keyword>
<feature type="chain" id="PRO_0000082519" description="Ubiquitin-conjugating enzyme E2-17 kDa">
    <location>
        <begin position="1"/>
        <end position="147"/>
    </location>
</feature>
<feature type="domain" description="UBC core" evidence="1">
    <location>
        <begin position="1"/>
        <end position="147"/>
    </location>
</feature>
<feature type="active site" description="Glycyl thioester intermediate" evidence="1 2">
    <location>
        <position position="85"/>
    </location>
</feature>
<comment type="function">
    <text evidence="1 3">Catalyzes the covalent attachment of ubiquitin to other proteins. Mediates the selective degradation of short-lived and abnormal proteins. Required for proper telomere behavior during cell divisions and possibly for ubiquitination of proteins involved in postmeiotic stages of spermatogenesis. Deletion mutations are lethal in homozygotes.</text>
</comment>
<comment type="catalytic activity">
    <reaction evidence="1 2">
        <text>S-ubiquitinyl-[E1 ubiquitin-activating enzyme]-L-cysteine + [E2 ubiquitin-conjugating enzyme]-L-cysteine = [E1 ubiquitin-activating enzyme]-L-cysteine + S-ubiquitinyl-[E2 ubiquitin-conjugating enzyme]-L-cysteine.</text>
        <dbReference type="EC" id="2.3.2.23"/>
    </reaction>
</comment>
<comment type="pathway">
    <text evidence="1">Protein modification; protein ubiquitination.</text>
</comment>
<comment type="interaction">
    <interactant intactId="EBI-196394">
        <id>P25867</id>
    </interactant>
    <interactant intactId="EBI-91747">
        <id>A1Z9I6</id>
        <label>anon-EST:GressD1</label>
    </interactant>
    <organismsDiffer>false</organismsDiffer>
    <experiments>3</experiments>
</comment>
<comment type="similarity">
    <text evidence="1">Belongs to the ubiquitin-conjugating enzyme family.</text>
</comment>
<organism>
    <name type="scientific">Drosophila melanogaster</name>
    <name type="common">Fruit fly</name>
    <dbReference type="NCBI Taxonomy" id="7227"/>
    <lineage>
        <taxon>Eukaryota</taxon>
        <taxon>Metazoa</taxon>
        <taxon>Ecdysozoa</taxon>
        <taxon>Arthropoda</taxon>
        <taxon>Hexapoda</taxon>
        <taxon>Insecta</taxon>
        <taxon>Pterygota</taxon>
        <taxon>Neoptera</taxon>
        <taxon>Endopterygota</taxon>
        <taxon>Diptera</taxon>
        <taxon>Brachycera</taxon>
        <taxon>Muscomorpha</taxon>
        <taxon>Ephydroidea</taxon>
        <taxon>Drosophilidae</taxon>
        <taxon>Drosophila</taxon>
        <taxon>Sophophora</taxon>
    </lineage>
</organism>
<protein>
    <recommendedName>
        <fullName>Ubiquitin-conjugating enzyme E2-17 kDa</fullName>
        <ecNumber>2.3.2.23</ecNumber>
    </recommendedName>
    <alternativeName>
        <fullName>E2 ubiquitin-conjugating enzyme D1</fullName>
    </alternativeName>
    <alternativeName>
        <fullName>Protein effete</fullName>
    </alternativeName>
    <alternativeName>
        <fullName>Ubiquitin carrier protein</fullName>
    </alternativeName>
    <alternativeName>
        <fullName>Ubiquitin-protein ligase</fullName>
    </alternativeName>
</protein>
<accession>P25867</accession>
<accession>Q9VFG6</accession>
<proteinExistence type="evidence at protein level"/>
<name>UBCD1_DROME</name>
<sequence length="147" mass="16678">MALKRINKELQDLGRDPPAQCSAGPVGDDLFHWQATIMGPPDSPYQGGVFFLTIHFPTDYPFKPPKVAFTTRIYHPNINSNGSICLDILRSQWSPALTISKVLLSICSLLCDPNPDDPLVPEIARIYKTDREKYNELAREWTRKYAM</sequence>
<gene>
    <name type="primary">eff</name>
    <name type="synonym">UbcD1</name>
    <name type="ORF">CG7425</name>
</gene>